<comment type="function">
    <text evidence="1">An essential GTPase which binds GTP, GDP and possibly (p)ppGpp with moderate affinity, with high nucleotide exchange rates and a fairly low GTP hydrolysis rate. Plays a role in control of the cell cycle, stress response, ribosome biogenesis and in those bacteria that undergo differentiation, in morphogenesis control.</text>
</comment>
<comment type="cofactor">
    <cofactor evidence="1">
        <name>Mg(2+)</name>
        <dbReference type="ChEBI" id="CHEBI:18420"/>
    </cofactor>
</comment>
<comment type="subunit">
    <text evidence="1">Monomer.</text>
</comment>
<comment type="subcellular location">
    <subcellularLocation>
        <location evidence="1">Cytoplasm</location>
    </subcellularLocation>
</comment>
<comment type="similarity">
    <text evidence="1">Belongs to the TRAFAC class OBG-HflX-like GTPase superfamily. OBG GTPase family.</text>
</comment>
<reference key="1">
    <citation type="journal article" date="2007" name="Proc. Natl. Acad. Sci. U.S.A.">
        <title>The Orientia tsutsugamushi genome reveals massive proliferation of conjugative type IV secretion system and host-cell interaction genes.</title>
        <authorList>
            <person name="Cho N.-H."/>
            <person name="Kim H.-R."/>
            <person name="Lee J.-H."/>
            <person name="Kim S.-Y."/>
            <person name="Kim J."/>
            <person name="Cha S."/>
            <person name="Kim S.-Y."/>
            <person name="Darby A.C."/>
            <person name="Fuxelius H.-H."/>
            <person name="Yin J."/>
            <person name="Kim J.H."/>
            <person name="Kim J."/>
            <person name="Lee S.J."/>
            <person name="Koh Y.-S."/>
            <person name="Jang W.-J."/>
            <person name="Park K.-H."/>
            <person name="Andersson S.G.E."/>
            <person name="Choi M.-S."/>
            <person name="Kim I.-S."/>
        </authorList>
    </citation>
    <scope>NUCLEOTIDE SEQUENCE [LARGE SCALE GENOMIC DNA]</scope>
    <source>
        <strain>Boryong</strain>
    </source>
</reference>
<feature type="chain" id="PRO_0000386105" description="GTPase Obg">
    <location>
        <begin position="1"/>
        <end position="329"/>
    </location>
</feature>
<feature type="domain" description="Obg" evidence="2">
    <location>
        <begin position="1"/>
        <end position="159"/>
    </location>
</feature>
<feature type="domain" description="OBG-type G" evidence="1">
    <location>
        <begin position="160"/>
        <end position="327"/>
    </location>
</feature>
<feature type="binding site" evidence="1">
    <location>
        <begin position="166"/>
        <end position="173"/>
    </location>
    <ligand>
        <name>GTP</name>
        <dbReference type="ChEBI" id="CHEBI:37565"/>
    </ligand>
</feature>
<feature type="binding site" evidence="1">
    <location>
        <position position="173"/>
    </location>
    <ligand>
        <name>Mg(2+)</name>
        <dbReference type="ChEBI" id="CHEBI:18420"/>
    </ligand>
</feature>
<feature type="binding site" evidence="1">
    <location>
        <begin position="191"/>
        <end position="195"/>
    </location>
    <ligand>
        <name>GTP</name>
        <dbReference type="ChEBI" id="CHEBI:37565"/>
    </ligand>
</feature>
<feature type="binding site" evidence="1">
    <location>
        <position position="193"/>
    </location>
    <ligand>
        <name>Mg(2+)</name>
        <dbReference type="ChEBI" id="CHEBI:18420"/>
    </ligand>
</feature>
<feature type="binding site" evidence="1">
    <location>
        <begin position="212"/>
        <end position="215"/>
    </location>
    <ligand>
        <name>GTP</name>
        <dbReference type="ChEBI" id="CHEBI:37565"/>
    </ligand>
</feature>
<feature type="binding site" evidence="1">
    <location>
        <begin position="279"/>
        <end position="282"/>
    </location>
    <ligand>
        <name>GTP</name>
        <dbReference type="ChEBI" id="CHEBI:37565"/>
    </ligand>
</feature>
<feature type="binding site" evidence="1">
    <location>
        <begin position="308"/>
        <end position="310"/>
    </location>
    <ligand>
        <name>GTP</name>
        <dbReference type="ChEBI" id="CHEBI:37565"/>
    </ligand>
</feature>
<proteinExistence type="inferred from homology"/>
<organism>
    <name type="scientific">Orientia tsutsugamushi (strain Boryong)</name>
    <name type="common">Rickettsia tsutsugamushi</name>
    <dbReference type="NCBI Taxonomy" id="357244"/>
    <lineage>
        <taxon>Bacteria</taxon>
        <taxon>Pseudomonadati</taxon>
        <taxon>Pseudomonadota</taxon>
        <taxon>Alphaproteobacteria</taxon>
        <taxon>Rickettsiales</taxon>
        <taxon>Rickettsiaceae</taxon>
        <taxon>Rickettsieae</taxon>
        <taxon>Orientia</taxon>
    </lineage>
</organism>
<protein>
    <recommendedName>
        <fullName evidence="1">GTPase Obg</fullName>
        <ecNumber evidence="1">3.6.5.-</ecNumber>
    </recommendedName>
    <alternativeName>
        <fullName evidence="1">GTP-binding protein Obg</fullName>
    </alternativeName>
</protein>
<keyword id="KW-0963">Cytoplasm</keyword>
<keyword id="KW-0342">GTP-binding</keyword>
<keyword id="KW-0378">Hydrolase</keyword>
<keyword id="KW-0460">Magnesium</keyword>
<keyword id="KW-0479">Metal-binding</keyword>
<keyword id="KW-0547">Nucleotide-binding</keyword>
<keyword id="KW-1185">Reference proteome</keyword>
<gene>
    <name evidence="1" type="primary">obg</name>
    <name type="ordered locus">OTBS_0924</name>
</gene>
<accession>A5CDM6</accession>
<name>OBG_ORITB</name>
<sequence length="329" mass="36000">MQFIDEAKIFIKGGNGGDGCVSFRREKFVPNGGPDGGNGGCGGDIIFIGDRHLNTLINFKFKQHFLAQNGRAGAGNNRTGKSGQNLVLKVPVGTQILSNNKEHVIFDLTKDGQEFIIIRGGKGGLGNTYFKSSINQKPRKNTVGEIGDSMWVWLHLKLLSDVGLVGLPNAGKSTFLSAITSAKPKIADYPFTTLTPNLGVVYINNNSFVVADIPGLIAGAHLGQGLGDKFLKHIERCRIIVHLLDITAENLLQNYYTIRDELSSYSLSLKDKTEILCFTKTDTQSNEVIMSKLLELQPVINRVIYPISSYTKYGIKKLLANILSELQKS</sequence>
<dbReference type="EC" id="3.6.5.-" evidence="1"/>
<dbReference type="EMBL" id="AM494475">
    <property type="protein sequence ID" value="CAM79990.1"/>
    <property type="molecule type" value="Genomic_DNA"/>
</dbReference>
<dbReference type="RefSeq" id="WP_011944707.1">
    <property type="nucleotide sequence ID" value="NC_009488.1"/>
</dbReference>
<dbReference type="SMR" id="A5CDM6"/>
<dbReference type="KEGG" id="ots:OTBS_0924"/>
<dbReference type="eggNOG" id="COG0536">
    <property type="taxonomic scope" value="Bacteria"/>
</dbReference>
<dbReference type="HOGENOM" id="CLU_011747_2_3_5"/>
<dbReference type="Proteomes" id="UP000001565">
    <property type="component" value="Chromosome"/>
</dbReference>
<dbReference type="GO" id="GO:0005737">
    <property type="term" value="C:cytoplasm"/>
    <property type="evidence" value="ECO:0007669"/>
    <property type="project" value="UniProtKB-SubCell"/>
</dbReference>
<dbReference type="GO" id="GO:0005525">
    <property type="term" value="F:GTP binding"/>
    <property type="evidence" value="ECO:0007669"/>
    <property type="project" value="UniProtKB-UniRule"/>
</dbReference>
<dbReference type="GO" id="GO:0003924">
    <property type="term" value="F:GTPase activity"/>
    <property type="evidence" value="ECO:0007669"/>
    <property type="project" value="UniProtKB-UniRule"/>
</dbReference>
<dbReference type="GO" id="GO:0000287">
    <property type="term" value="F:magnesium ion binding"/>
    <property type="evidence" value="ECO:0007669"/>
    <property type="project" value="InterPro"/>
</dbReference>
<dbReference type="GO" id="GO:0042254">
    <property type="term" value="P:ribosome biogenesis"/>
    <property type="evidence" value="ECO:0007669"/>
    <property type="project" value="UniProtKB-UniRule"/>
</dbReference>
<dbReference type="CDD" id="cd01898">
    <property type="entry name" value="Obg"/>
    <property type="match status" value="1"/>
</dbReference>
<dbReference type="FunFam" id="2.70.210.12:FF:000001">
    <property type="entry name" value="GTPase Obg"/>
    <property type="match status" value="1"/>
</dbReference>
<dbReference type="Gene3D" id="2.70.210.12">
    <property type="entry name" value="GTP1/OBG domain"/>
    <property type="match status" value="1"/>
</dbReference>
<dbReference type="Gene3D" id="3.40.50.300">
    <property type="entry name" value="P-loop containing nucleotide triphosphate hydrolases"/>
    <property type="match status" value="1"/>
</dbReference>
<dbReference type="HAMAP" id="MF_01454">
    <property type="entry name" value="GTPase_Obg"/>
    <property type="match status" value="1"/>
</dbReference>
<dbReference type="InterPro" id="IPR031167">
    <property type="entry name" value="G_OBG"/>
</dbReference>
<dbReference type="InterPro" id="IPR006073">
    <property type="entry name" value="GTP-bd"/>
</dbReference>
<dbReference type="InterPro" id="IPR014100">
    <property type="entry name" value="GTP-bd_Obg/CgtA"/>
</dbReference>
<dbReference type="InterPro" id="IPR006169">
    <property type="entry name" value="GTP1_OBG_dom"/>
</dbReference>
<dbReference type="InterPro" id="IPR036726">
    <property type="entry name" value="GTP1_OBG_dom_sf"/>
</dbReference>
<dbReference type="InterPro" id="IPR045086">
    <property type="entry name" value="OBG_GTPase"/>
</dbReference>
<dbReference type="InterPro" id="IPR027417">
    <property type="entry name" value="P-loop_NTPase"/>
</dbReference>
<dbReference type="NCBIfam" id="TIGR02729">
    <property type="entry name" value="Obg_CgtA"/>
    <property type="match status" value="1"/>
</dbReference>
<dbReference type="NCBIfam" id="NF008955">
    <property type="entry name" value="PRK12297.1"/>
    <property type="match status" value="1"/>
</dbReference>
<dbReference type="NCBIfam" id="NF008956">
    <property type="entry name" value="PRK12299.1"/>
    <property type="match status" value="1"/>
</dbReference>
<dbReference type="PANTHER" id="PTHR11702">
    <property type="entry name" value="DEVELOPMENTALLY REGULATED GTP-BINDING PROTEIN-RELATED"/>
    <property type="match status" value="1"/>
</dbReference>
<dbReference type="PANTHER" id="PTHR11702:SF31">
    <property type="entry name" value="MITOCHONDRIAL RIBOSOME-ASSOCIATED GTPASE 2"/>
    <property type="match status" value="1"/>
</dbReference>
<dbReference type="Pfam" id="PF01018">
    <property type="entry name" value="GTP1_OBG"/>
    <property type="match status" value="1"/>
</dbReference>
<dbReference type="Pfam" id="PF01926">
    <property type="entry name" value="MMR_HSR1"/>
    <property type="match status" value="1"/>
</dbReference>
<dbReference type="PIRSF" id="PIRSF002401">
    <property type="entry name" value="GTP_bd_Obg/CgtA"/>
    <property type="match status" value="1"/>
</dbReference>
<dbReference type="PRINTS" id="PR00326">
    <property type="entry name" value="GTP1OBG"/>
</dbReference>
<dbReference type="SUPFAM" id="SSF82051">
    <property type="entry name" value="Obg GTP-binding protein N-terminal domain"/>
    <property type="match status" value="1"/>
</dbReference>
<dbReference type="SUPFAM" id="SSF52540">
    <property type="entry name" value="P-loop containing nucleoside triphosphate hydrolases"/>
    <property type="match status" value="1"/>
</dbReference>
<dbReference type="PROSITE" id="PS51710">
    <property type="entry name" value="G_OBG"/>
    <property type="match status" value="1"/>
</dbReference>
<dbReference type="PROSITE" id="PS51883">
    <property type="entry name" value="OBG"/>
    <property type="match status" value="1"/>
</dbReference>
<evidence type="ECO:0000255" key="1">
    <source>
        <dbReference type="HAMAP-Rule" id="MF_01454"/>
    </source>
</evidence>
<evidence type="ECO:0000255" key="2">
    <source>
        <dbReference type="PROSITE-ProRule" id="PRU01231"/>
    </source>
</evidence>